<proteinExistence type="inferred from homology"/>
<protein>
    <recommendedName>
        <fullName evidence="1">Small ribosomal subunit protein bS6</fullName>
    </recommendedName>
    <alternativeName>
        <fullName evidence="2">30S ribosomal protein S6</fullName>
    </alternativeName>
</protein>
<name>RS6_SALTO</name>
<feature type="chain" id="PRO_1000079464" description="Small ribosomal subunit protein bS6">
    <location>
        <begin position="1"/>
        <end position="96"/>
    </location>
</feature>
<gene>
    <name evidence="1" type="primary">rpsF</name>
    <name type="ordered locus">Strop_4556</name>
</gene>
<comment type="function">
    <text evidence="1">Binds together with bS18 to 16S ribosomal RNA.</text>
</comment>
<comment type="similarity">
    <text evidence="1">Belongs to the bacterial ribosomal protein bS6 family.</text>
</comment>
<dbReference type="EMBL" id="CP000667">
    <property type="protein sequence ID" value="ABP56984.1"/>
    <property type="molecule type" value="Genomic_DNA"/>
</dbReference>
<dbReference type="RefSeq" id="WP_012015748.1">
    <property type="nucleotide sequence ID" value="NC_009380.1"/>
</dbReference>
<dbReference type="SMR" id="A4XDG8"/>
<dbReference type="STRING" id="369723.Strop_4556"/>
<dbReference type="KEGG" id="stp:Strop_4556"/>
<dbReference type="PATRIC" id="fig|369723.5.peg.4712"/>
<dbReference type="eggNOG" id="COG0360">
    <property type="taxonomic scope" value="Bacteria"/>
</dbReference>
<dbReference type="HOGENOM" id="CLU_113441_5_3_11"/>
<dbReference type="Proteomes" id="UP000000235">
    <property type="component" value="Chromosome"/>
</dbReference>
<dbReference type="GO" id="GO:0005737">
    <property type="term" value="C:cytoplasm"/>
    <property type="evidence" value="ECO:0007669"/>
    <property type="project" value="UniProtKB-ARBA"/>
</dbReference>
<dbReference type="GO" id="GO:1990904">
    <property type="term" value="C:ribonucleoprotein complex"/>
    <property type="evidence" value="ECO:0007669"/>
    <property type="project" value="UniProtKB-KW"/>
</dbReference>
<dbReference type="GO" id="GO:0005840">
    <property type="term" value="C:ribosome"/>
    <property type="evidence" value="ECO:0007669"/>
    <property type="project" value="UniProtKB-KW"/>
</dbReference>
<dbReference type="GO" id="GO:0070181">
    <property type="term" value="F:small ribosomal subunit rRNA binding"/>
    <property type="evidence" value="ECO:0007669"/>
    <property type="project" value="TreeGrafter"/>
</dbReference>
<dbReference type="GO" id="GO:0003735">
    <property type="term" value="F:structural constituent of ribosome"/>
    <property type="evidence" value="ECO:0007669"/>
    <property type="project" value="InterPro"/>
</dbReference>
<dbReference type="GO" id="GO:0006412">
    <property type="term" value="P:translation"/>
    <property type="evidence" value="ECO:0007669"/>
    <property type="project" value="UniProtKB-UniRule"/>
</dbReference>
<dbReference type="CDD" id="cd00473">
    <property type="entry name" value="bS6"/>
    <property type="match status" value="1"/>
</dbReference>
<dbReference type="FunFam" id="3.30.70.60:FF:000002">
    <property type="entry name" value="30S ribosomal protein S6"/>
    <property type="match status" value="1"/>
</dbReference>
<dbReference type="Gene3D" id="3.30.70.60">
    <property type="match status" value="1"/>
</dbReference>
<dbReference type="HAMAP" id="MF_00360">
    <property type="entry name" value="Ribosomal_bS6"/>
    <property type="match status" value="1"/>
</dbReference>
<dbReference type="InterPro" id="IPR000529">
    <property type="entry name" value="Ribosomal_bS6"/>
</dbReference>
<dbReference type="InterPro" id="IPR035980">
    <property type="entry name" value="Ribosomal_bS6_sf"/>
</dbReference>
<dbReference type="InterPro" id="IPR020814">
    <property type="entry name" value="Ribosomal_S6_plastid/chlpt"/>
</dbReference>
<dbReference type="InterPro" id="IPR014717">
    <property type="entry name" value="Transl_elong_EF1B/ribsomal_bS6"/>
</dbReference>
<dbReference type="NCBIfam" id="TIGR00166">
    <property type="entry name" value="S6"/>
    <property type="match status" value="1"/>
</dbReference>
<dbReference type="PANTHER" id="PTHR21011">
    <property type="entry name" value="MITOCHONDRIAL 28S RIBOSOMAL PROTEIN S6"/>
    <property type="match status" value="1"/>
</dbReference>
<dbReference type="PANTHER" id="PTHR21011:SF1">
    <property type="entry name" value="SMALL RIBOSOMAL SUBUNIT PROTEIN BS6M"/>
    <property type="match status" value="1"/>
</dbReference>
<dbReference type="Pfam" id="PF01250">
    <property type="entry name" value="Ribosomal_S6"/>
    <property type="match status" value="1"/>
</dbReference>
<dbReference type="SUPFAM" id="SSF54995">
    <property type="entry name" value="Ribosomal protein S6"/>
    <property type="match status" value="1"/>
</dbReference>
<organism>
    <name type="scientific">Salinispora tropica (strain ATCC BAA-916 / DSM 44818 / JCM 13857 / NBRC 105044 / CNB-440)</name>
    <dbReference type="NCBI Taxonomy" id="369723"/>
    <lineage>
        <taxon>Bacteria</taxon>
        <taxon>Bacillati</taxon>
        <taxon>Actinomycetota</taxon>
        <taxon>Actinomycetes</taxon>
        <taxon>Micromonosporales</taxon>
        <taxon>Micromonosporaceae</taxon>
        <taxon>Salinispora</taxon>
    </lineage>
</organism>
<evidence type="ECO:0000255" key="1">
    <source>
        <dbReference type="HAMAP-Rule" id="MF_00360"/>
    </source>
</evidence>
<evidence type="ECO:0000305" key="2"/>
<keyword id="KW-1185">Reference proteome</keyword>
<keyword id="KW-0687">Ribonucleoprotein</keyword>
<keyword id="KW-0689">Ribosomal protein</keyword>
<keyword id="KW-0694">RNA-binding</keyword>
<keyword id="KW-0699">rRNA-binding</keyword>
<sequence>MRHYEIMVILDSSLEERTVAPSLDTYLNVIRTAGGSVEKTDVWGRRRLAYEIDKKTEGIYAVIDLQATPAAVAELDRQLRLNESVLRTKVIRPEVR</sequence>
<accession>A4XDG8</accession>
<reference key="1">
    <citation type="journal article" date="2007" name="Proc. Natl. Acad. Sci. U.S.A.">
        <title>Genome sequencing reveals complex secondary metabolome in the marine actinomycete Salinispora tropica.</title>
        <authorList>
            <person name="Udwary D.W."/>
            <person name="Zeigler L."/>
            <person name="Asolkar R.N."/>
            <person name="Singan V."/>
            <person name="Lapidus A."/>
            <person name="Fenical W."/>
            <person name="Jensen P.R."/>
            <person name="Moore B.S."/>
        </authorList>
    </citation>
    <scope>NUCLEOTIDE SEQUENCE [LARGE SCALE GENOMIC DNA]</scope>
    <source>
        <strain>ATCC BAA-916 / DSM 44818 / JCM 13857 / NBRC 105044 / CNB-440</strain>
    </source>
</reference>